<keyword id="KW-0175">Coiled coil</keyword>
<keyword id="KW-0256">Endoplasmic reticulum</keyword>
<keyword id="KW-0472">Membrane</keyword>
<keyword id="KW-1185">Reference proteome</keyword>
<keyword id="KW-0732">Signal</keyword>
<keyword id="KW-0812">Transmembrane</keyword>
<keyword id="KW-1133">Transmembrane helix</keyword>
<proteinExistence type="evidence at transcript level"/>
<dbReference type="EMBL" id="BC077957">
    <property type="protein sequence ID" value="AAH77957.1"/>
    <property type="molecule type" value="mRNA"/>
</dbReference>
<dbReference type="RefSeq" id="NP_001087058.1">
    <property type="nucleotide sequence ID" value="NM_001093589.1"/>
</dbReference>
<dbReference type="SMR" id="Q6AZI2"/>
<dbReference type="DNASU" id="446893"/>
<dbReference type="GeneID" id="446893"/>
<dbReference type="KEGG" id="xla:446893"/>
<dbReference type="AGR" id="Xenbase:XB-GENE-6255087"/>
<dbReference type="CTD" id="446893"/>
<dbReference type="Xenbase" id="XB-GENE-6255087">
    <property type="gene designation" value="ccdc47.S"/>
</dbReference>
<dbReference type="OrthoDB" id="10039147at2759"/>
<dbReference type="Proteomes" id="UP000186698">
    <property type="component" value="Chromosome 9_10S"/>
</dbReference>
<dbReference type="Bgee" id="446893">
    <property type="expression patterns" value="Expressed in egg cell and 19 other cell types or tissues"/>
</dbReference>
<dbReference type="GO" id="GO:0005783">
    <property type="term" value="C:endoplasmic reticulum"/>
    <property type="evidence" value="ECO:0000318"/>
    <property type="project" value="GO_Central"/>
</dbReference>
<dbReference type="GO" id="GO:0005789">
    <property type="term" value="C:endoplasmic reticulum membrane"/>
    <property type="evidence" value="ECO:0000250"/>
    <property type="project" value="UniProtKB"/>
</dbReference>
<dbReference type="GO" id="GO:0160064">
    <property type="term" value="C:multi-pass translocon complex"/>
    <property type="evidence" value="ECO:0000250"/>
    <property type="project" value="UniProtKB"/>
</dbReference>
<dbReference type="GO" id="GO:0030867">
    <property type="term" value="C:rough endoplasmic reticulum membrane"/>
    <property type="evidence" value="ECO:0007669"/>
    <property type="project" value="UniProtKB-SubCell"/>
</dbReference>
<dbReference type="GO" id="GO:0005509">
    <property type="term" value="F:calcium ion binding"/>
    <property type="evidence" value="ECO:0000318"/>
    <property type="project" value="GO_Central"/>
</dbReference>
<dbReference type="GO" id="GO:0044183">
    <property type="term" value="F:protein folding chaperone"/>
    <property type="evidence" value="ECO:0000250"/>
    <property type="project" value="UniProtKB"/>
</dbReference>
<dbReference type="GO" id="GO:0043022">
    <property type="term" value="F:ribosome binding"/>
    <property type="evidence" value="ECO:0000250"/>
    <property type="project" value="UniProtKB"/>
</dbReference>
<dbReference type="GO" id="GO:0032469">
    <property type="term" value="P:endoplasmic reticulum calcium ion homeostasis"/>
    <property type="evidence" value="ECO:0007669"/>
    <property type="project" value="InterPro"/>
</dbReference>
<dbReference type="GO" id="GO:0160063">
    <property type="term" value="P:multi-pass transmembrane protein insertion into ER membrane"/>
    <property type="evidence" value="ECO:0000250"/>
    <property type="project" value="UniProtKB"/>
</dbReference>
<dbReference type="GO" id="GO:0045048">
    <property type="term" value="P:protein insertion into ER membrane"/>
    <property type="evidence" value="ECO:0000250"/>
    <property type="project" value="UniProtKB"/>
</dbReference>
<dbReference type="InterPro" id="IPR012879">
    <property type="entry name" value="CCDC47"/>
</dbReference>
<dbReference type="PANTHER" id="PTHR12883">
    <property type="entry name" value="ADIPOCYTE-SPECIFIC PROTEIN 4-RELATED"/>
    <property type="match status" value="1"/>
</dbReference>
<dbReference type="PANTHER" id="PTHR12883:SF0">
    <property type="entry name" value="PAT COMPLEX SUBUNIT CCDC47"/>
    <property type="match status" value="1"/>
</dbReference>
<dbReference type="Pfam" id="PF07946">
    <property type="entry name" value="CCDC47"/>
    <property type="match status" value="1"/>
</dbReference>
<protein>
    <recommendedName>
        <fullName evidence="6">PAT complex subunit CCDC47</fullName>
    </recommendedName>
    <alternativeName>
        <fullName>Coiled-coil domain-containing protein 47</fullName>
    </alternativeName>
</protein>
<accession>Q6AZI2</accession>
<name>CCD47_XENLA</name>
<sequence>MILFTRLLAVSLLLVSGAFAKFQEFDDSDDVAEYDDNDFAEFEDAADEAPTLRPPSQQVPEKEDEIEDDDEEEEEATVELEGQEEFEEDTEGQEGDADAEPYDDEEFENYDDRLDTGTPNKNNDPITIVDVPAHLQNSWESYYMEILMVTGLLAYIMNYIIGKNKNSRLAQAWFNSHRELLESNFSLVGDDGMNKDAVSTGMLNQENDHIYNMWCSGRLCCEGMLIQLKFIKRQDLLNVLSRMMRPVCDQVQIKVTMNDEDMDTYVFSVGTRKTLIRLQKEMQDLSEFCGDKPKSAAKMGLPESMAVLAEMGEVTDGIMDTKMVHYLTNYSDKIESIHFSDQFSGPKIMQEEGQPLKLPETKKTLLFTFNVPGSGNASVKDMEALLPLMNMVIYSIDKVKKFRLNREGKQKADKNRARVEENFLKITHVQRQEAAQTRREEKKRAEKERIMNEEDPEKQRRLEEAAQRREQKKIEKKQMKMKQIKVKAM</sequence>
<organism>
    <name type="scientific">Xenopus laevis</name>
    <name type="common">African clawed frog</name>
    <dbReference type="NCBI Taxonomy" id="8355"/>
    <lineage>
        <taxon>Eukaryota</taxon>
        <taxon>Metazoa</taxon>
        <taxon>Chordata</taxon>
        <taxon>Craniata</taxon>
        <taxon>Vertebrata</taxon>
        <taxon>Euteleostomi</taxon>
        <taxon>Amphibia</taxon>
        <taxon>Batrachia</taxon>
        <taxon>Anura</taxon>
        <taxon>Pipoidea</taxon>
        <taxon>Pipidae</taxon>
        <taxon>Xenopodinae</taxon>
        <taxon>Xenopus</taxon>
        <taxon>Xenopus</taxon>
    </lineage>
</organism>
<evidence type="ECO:0000250" key="1">
    <source>
        <dbReference type="UniProtKB" id="A0A8I3P7X4"/>
    </source>
</evidence>
<evidence type="ECO:0000250" key="2">
    <source>
        <dbReference type="UniProtKB" id="Q96A33"/>
    </source>
</evidence>
<evidence type="ECO:0000250" key="3">
    <source>
        <dbReference type="UniProtKB" id="Q9D024"/>
    </source>
</evidence>
<evidence type="ECO:0000255" key="4"/>
<evidence type="ECO:0000256" key="5">
    <source>
        <dbReference type="SAM" id="MobiDB-lite"/>
    </source>
</evidence>
<evidence type="ECO:0000305" key="6"/>
<feature type="signal peptide" evidence="4">
    <location>
        <begin position="1"/>
        <end position="20"/>
    </location>
</feature>
<feature type="chain" id="PRO_0000235803" description="PAT complex subunit CCDC47">
    <location>
        <begin position="21"/>
        <end position="489"/>
    </location>
</feature>
<feature type="topological domain" description="Cytoplasmic" evidence="1">
    <location>
        <begin position="21"/>
        <end position="141"/>
    </location>
</feature>
<feature type="transmembrane region" description="Helical" evidence="4">
    <location>
        <begin position="142"/>
        <end position="162"/>
    </location>
</feature>
<feature type="topological domain" description="Lumenal" evidence="1">
    <location>
        <begin position="163"/>
        <end position="489"/>
    </location>
</feature>
<feature type="region of interest" description="Disordered" evidence="5">
    <location>
        <begin position="33"/>
        <end position="103"/>
    </location>
</feature>
<feature type="region of interest" description="Disordered" evidence="5">
    <location>
        <begin position="430"/>
        <end position="489"/>
    </location>
</feature>
<feature type="coiled-coil region" evidence="4">
    <location>
        <begin position="428"/>
        <end position="489"/>
    </location>
</feature>
<feature type="compositionally biased region" description="Acidic residues" evidence="5">
    <location>
        <begin position="33"/>
        <end position="47"/>
    </location>
</feature>
<feature type="compositionally biased region" description="Acidic residues" evidence="5">
    <location>
        <begin position="62"/>
        <end position="103"/>
    </location>
</feature>
<feature type="compositionally biased region" description="Basic and acidic residues" evidence="5">
    <location>
        <begin position="436"/>
        <end position="478"/>
    </location>
</feature>
<feature type="compositionally biased region" description="Basic residues" evidence="5">
    <location>
        <begin position="479"/>
        <end position="489"/>
    </location>
</feature>
<reference key="1">
    <citation type="submission" date="2004-07" db="EMBL/GenBank/DDBJ databases">
        <authorList>
            <consortium name="NIH - Xenopus Gene Collection (XGC) project"/>
        </authorList>
    </citation>
    <scope>NUCLEOTIDE SEQUENCE [LARGE SCALE MRNA]</scope>
    <source>
        <tissue>Embryo</tissue>
    </source>
</reference>
<gene>
    <name type="primary">ccdc47</name>
</gene>
<comment type="function">
    <text evidence="2">Component of the multi-pass translocon (MPT) complex that mediates insertion of multi-pass membrane proteins into the lipid bilayer of membranes. The MPT complex takes over after the SEC61 complex: following membrane insertion of the first few transmembrane segments of proteins by the SEC61 complex, the MPT complex occludes the lateral gate of the SEC61 complex to promote insertion of subsequent transmembrane regions.</text>
</comment>
<comment type="subunit">
    <text evidence="2">Component of the multi-pass translocon (MPT) complex.</text>
</comment>
<comment type="subcellular location">
    <subcellularLocation>
        <location evidence="2">Endoplasmic reticulum membrane</location>
        <topology evidence="4">Single-pass type I membrane protein</topology>
    </subcellularLocation>
    <subcellularLocation>
        <location evidence="3">Rough endoplasmic reticulum membrane</location>
        <topology evidence="4">Single-pass type I membrane protein</topology>
    </subcellularLocation>
</comment>
<comment type="similarity">
    <text evidence="6">Belongs to the CCDC47 family.</text>
</comment>